<protein>
    <recommendedName>
        <fullName evidence="1">4-hydroxy-3-methylbut-2-enyl diphosphate reductase</fullName>
        <shortName evidence="1">HMBPP reductase</shortName>
        <ecNumber evidence="1">1.17.7.4</ecNumber>
    </recommendedName>
</protein>
<proteinExistence type="inferred from homology"/>
<accession>A7ZCD0</accession>
<keyword id="KW-0004">4Fe-4S</keyword>
<keyword id="KW-0408">Iron</keyword>
<keyword id="KW-0411">Iron-sulfur</keyword>
<keyword id="KW-0414">Isoprene biosynthesis</keyword>
<keyword id="KW-0479">Metal-binding</keyword>
<keyword id="KW-0560">Oxidoreductase</keyword>
<comment type="function">
    <text evidence="1">Catalyzes the conversion of 1-hydroxy-2-methyl-2-(E)-butenyl 4-diphosphate (HMBPP) into a mixture of isopentenyl diphosphate (IPP) and dimethylallyl diphosphate (DMAPP). Acts in the terminal step of the DOXP/MEP pathway for isoprenoid precursor biosynthesis.</text>
</comment>
<comment type="catalytic activity">
    <reaction evidence="1">
        <text>isopentenyl diphosphate + 2 oxidized [2Fe-2S]-[ferredoxin] + H2O = (2E)-4-hydroxy-3-methylbut-2-enyl diphosphate + 2 reduced [2Fe-2S]-[ferredoxin] + 2 H(+)</text>
        <dbReference type="Rhea" id="RHEA:24488"/>
        <dbReference type="Rhea" id="RHEA-COMP:10000"/>
        <dbReference type="Rhea" id="RHEA-COMP:10001"/>
        <dbReference type="ChEBI" id="CHEBI:15377"/>
        <dbReference type="ChEBI" id="CHEBI:15378"/>
        <dbReference type="ChEBI" id="CHEBI:33737"/>
        <dbReference type="ChEBI" id="CHEBI:33738"/>
        <dbReference type="ChEBI" id="CHEBI:128753"/>
        <dbReference type="ChEBI" id="CHEBI:128769"/>
        <dbReference type="EC" id="1.17.7.4"/>
    </reaction>
</comment>
<comment type="catalytic activity">
    <reaction evidence="1">
        <text>dimethylallyl diphosphate + 2 oxidized [2Fe-2S]-[ferredoxin] + H2O = (2E)-4-hydroxy-3-methylbut-2-enyl diphosphate + 2 reduced [2Fe-2S]-[ferredoxin] + 2 H(+)</text>
        <dbReference type="Rhea" id="RHEA:24825"/>
        <dbReference type="Rhea" id="RHEA-COMP:10000"/>
        <dbReference type="Rhea" id="RHEA-COMP:10001"/>
        <dbReference type="ChEBI" id="CHEBI:15377"/>
        <dbReference type="ChEBI" id="CHEBI:15378"/>
        <dbReference type="ChEBI" id="CHEBI:33737"/>
        <dbReference type="ChEBI" id="CHEBI:33738"/>
        <dbReference type="ChEBI" id="CHEBI:57623"/>
        <dbReference type="ChEBI" id="CHEBI:128753"/>
        <dbReference type="EC" id="1.17.7.4"/>
    </reaction>
</comment>
<comment type="cofactor">
    <cofactor evidence="1">
        <name>[4Fe-4S] cluster</name>
        <dbReference type="ChEBI" id="CHEBI:49883"/>
    </cofactor>
    <text evidence="1">Binds 1 [4Fe-4S] cluster per subunit.</text>
</comment>
<comment type="pathway">
    <text evidence="1">Isoprenoid biosynthesis; dimethylallyl diphosphate biosynthesis; dimethylallyl diphosphate from (2E)-4-hydroxy-3-methylbutenyl diphosphate: step 1/1.</text>
</comment>
<comment type="pathway">
    <text evidence="1">Isoprenoid biosynthesis; isopentenyl diphosphate biosynthesis via DXP pathway; isopentenyl diphosphate from 1-deoxy-D-xylulose 5-phosphate: step 6/6.</text>
</comment>
<comment type="similarity">
    <text evidence="1">Belongs to the IspH family.</text>
</comment>
<reference key="1">
    <citation type="submission" date="2007-10" db="EMBL/GenBank/DDBJ databases">
        <title>Genome sequence of Campylobacter concisus 13826 isolated from human feces.</title>
        <authorList>
            <person name="Fouts D.E."/>
            <person name="Mongodin E.F."/>
            <person name="Puiu D."/>
            <person name="Sebastian Y."/>
            <person name="Miller W.G."/>
            <person name="Mandrell R.E."/>
            <person name="On S."/>
            <person name="Nelson K.E."/>
        </authorList>
    </citation>
    <scope>NUCLEOTIDE SEQUENCE [LARGE SCALE GENOMIC DNA]</scope>
    <source>
        <strain>13826</strain>
    </source>
</reference>
<evidence type="ECO:0000255" key="1">
    <source>
        <dbReference type="HAMAP-Rule" id="MF_00191"/>
    </source>
</evidence>
<name>ISPH_CAMC1</name>
<feature type="chain" id="PRO_1000021093" description="4-hydroxy-3-methylbut-2-enyl diphosphate reductase">
    <location>
        <begin position="1"/>
        <end position="274"/>
    </location>
</feature>
<feature type="active site" description="Proton donor" evidence="1">
    <location>
        <position position="122"/>
    </location>
</feature>
<feature type="binding site" evidence="1">
    <location>
        <position position="12"/>
    </location>
    <ligand>
        <name>[4Fe-4S] cluster</name>
        <dbReference type="ChEBI" id="CHEBI:49883"/>
    </ligand>
</feature>
<feature type="binding site" evidence="1">
    <location>
        <position position="36"/>
    </location>
    <ligand>
        <name>(2E)-4-hydroxy-3-methylbut-2-enyl diphosphate</name>
        <dbReference type="ChEBI" id="CHEBI:128753"/>
    </ligand>
</feature>
<feature type="binding site" evidence="1">
    <location>
        <position position="36"/>
    </location>
    <ligand>
        <name>dimethylallyl diphosphate</name>
        <dbReference type="ChEBI" id="CHEBI:57623"/>
    </ligand>
</feature>
<feature type="binding site" evidence="1">
    <location>
        <position position="36"/>
    </location>
    <ligand>
        <name>isopentenyl diphosphate</name>
        <dbReference type="ChEBI" id="CHEBI:128769"/>
    </ligand>
</feature>
<feature type="binding site" evidence="1">
    <location>
        <position position="70"/>
    </location>
    <ligand>
        <name>(2E)-4-hydroxy-3-methylbut-2-enyl diphosphate</name>
        <dbReference type="ChEBI" id="CHEBI:128753"/>
    </ligand>
</feature>
<feature type="binding site" evidence="1">
    <location>
        <position position="70"/>
    </location>
    <ligand>
        <name>dimethylallyl diphosphate</name>
        <dbReference type="ChEBI" id="CHEBI:57623"/>
    </ligand>
</feature>
<feature type="binding site" evidence="1">
    <location>
        <position position="70"/>
    </location>
    <ligand>
        <name>isopentenyl diphosphate</name>
        <dbReference type="ChEBI" id="CHEBI:128769"/>
    </ligand>
</feature>
<feature type="binding site" evidence="1">
    <location>
        <position position="92"/>
    </location>
    <ligand>
        <name>[4Fe-4S] cluster</name>
        <dbReference type="ChEBI" id="CHEBI:49883"/>
    </ligand>
</feature>
<feature type="binding site" evidence="1">
    <location>
        <position position="120"/>
    </location>
    <ligand>
        <name>(2E)-4-hydroxy-3-methylbut-2-enyl diphosphate</name>
        <dbReference type="ChEBI" id="CHEBI:128753"/>
    </ligand>
</feature>
<feature type="binding site" evidence="1">
    <location>
        <position position="120"/>
    </location>
    <ligand>
        <name>dimethylallyl diphosphate</name>
        <dbReference type="ChEBI" id="CHEBI:57623"/>
    </ligand>
</feature>
<feature type="binding site" evidence="1">
    <location>
        <position position="120"/>
    </location>
    <ligand>
        <name>isopentenyl diphosphate</name>
        <dbReference type="ChEBI" id="CHEBI:128769"/>
    </ligand>
</feature>
<feature type="binding site" evidence="1">
    <location>
        <position position="158"/>
    </location>
    <ligand>
        <name>(2E)-4-hydroxy-3-methylbut-2-enyl diphosphate</name>
        <dbReference type="ChEBI" id="CHEBI:128753"/>
    </ligand>
</feature>
<feature type="binding site" evidence="1">
    <location>
        <position position="186"/>
    </location>
    <ligand>
        <name>[4Fe-4S] cluster</name>
        <dbReference type="ChEBI" id="CHEBI:49883"/>
    </ligand>
</feature>
<feature type="binding site" evidence="1">
    <location>
        <position position="214"/>
    </location>
    <ligand>
        <name>(2E)-4-hydroxy-3-methylbut-2-enyl diphosphate</name>
        <dbReference type="ChEBI" id="CHEBI:128753"/>
    </ligand>
</feature>
<feature type="binding site" evidence="1">
    <location>
        <position position="214"/>
    </location>
    <ligand>
        <name>dimethylallyl diphosphate</name>
        <dbReference type="ChEBI" id="CHEBI:57623"/>
    </ligand>
</feature>
<feature type="binding site" evidence="1">
    <location>
        <position position="214"/>
    </location>
    <ligand>
        <name>isopentenyl diphosphate</name>
        <dbReference type="ChEBI" id="CHEBI:128769"/>
    </ligand>
</feature>
<feature type="binding site" evidence="1">
    <location>
        <position position="215"/>
    </location>
    <ligand>
        <name>(2E)-4-hydroxy-3-methylbut-2-enyl diphosphate</name>
        <dbReference type="ChEBI" id="CHEBI:128753"/>
    </ligand>
</feature>
<feature type="binding site" evidence="1">
    <location>
        <position position="215"/>
    </location>
    <ligand>
        <name>dimethylallyl diphosphate</name>
        <dbReference type="ChEBI" id="CHEBI:57623"/>
    </ligand>
</feature>
<feature type="binding site" evidence="1">
    <location>
        <position position="215"/>
    </location>
    <ligand>
        <name>isopentenyl diphosphate</name>
        <dbReference type="ChEBI" id="CHEBI:128769"/>
    </ligand>
</feature>
<feature type="binding site" evidence="1">
    <location>
        <position position="216"/>
    </location>
    <ligand>
        <name>(2E)-4-hydroxy-3-methylbut-2-enyl diphosphate</name>
        <dbReference type="ChEBI" id="CHEBI:128753"/>
    </ligand>
</feature>
<feature type="binding site" evidence="1">
    <location>
        <position position="216"/>
    </location>
    <ligand>
        <name>dimethylallyl diphosphate</name>
        <dbReference type="ChEBI" id="CHEBI:57623"/>
    </ligand>
</feature>
<feature type="binding site" evidence="1">
    <location>
        <position position="216"/>
    </location>
    <ligand>
        <name>isopentenyl diphosphate</name>
        <dbReference type="ChEBI" id="CHEBI:128769"/>
    </ligand>
</feature>
<feature type="binding site" evidence="1">
    <location>
        <position position="258"/>
    </location>
    <ligand>
        <name>(2E)-4-hydroxy-3-methylbut-2-enyl diphosphate</name>
        <dbReference type="ChEBI" id="CHEBI:128753"/>
    </ligand>
</feature>
<feature type="binding site" evidence="1">
    <location>
        <position position="258"/>
    </location>
    <ligand>
        <name>dimethylallyl diphosphate</name>
        <dbReference type="ChEBI" id="CHEBI:57623"/>
    </ligand>
</feature>
<feature type="binding site" evidence="1">
    <location>
        <position position="258"/>
    </location>
    <ligand>
        <name>isopentenyl diphosphate</name>
        <dbReference type="ChEBI" id="CHEBI:128769"/>
    </ligand>
</feature>
<sequence>MKIELASSYGFCFGVKRAIKIAENAGDAATIGPLIHNNEEISRLEKNYNVKTLEGIDELKDEKKAIIRTHGITKNDLAELKKTDIKVIDATCPFVTKPQQICEKMSEEGYDVVIFGDMHHPEVKGVKSYAKGNVYVVLEESELEGIKFKQKVALVSQTTRKVEKFMQIANYLMLHVKELRVFNTICNATFENQEAAKNLAKRADVMIIIGGKNSSNTKQLYLISKNFCEDSYLIESEEELERSWFDGKNLCGISAGASTPDWIIQKVVDRIKKV</sequence>
<dbReference type="EC" id="1.17.7.4" evidence="1"/>
<dbReference type="EMBL" id="CP000792">
    <property type="protein sequence ID" value="EAT99035.1"/>
    <property type="molecule type" value="Genomic_DNA"/>
</dbReference>
<dbReference type="RefSeq" id="WP_012001413.1">
    <property type="nucleotide sequence ID" value="NC_009802.2"/>
</dbReference>
<dbReference type="SMR" id="A7ZCD0"/>
<dbReference type="STRING" id="360104.CCC13826_1566"/>
<dbReference type="KEGG" id="cco:CCC13826_1566"/>
<dbReference type="eggNOG" id="COG0761">
    <property type="taxonomic scope" value="Bacteria"/>
</dbReference>
<dbReference type="HOGENOM" id="CLU_027486_0_1_7"/>
<dbReference type="OrthoDB" id="9804068at2"/>
<dbReference type="UniPathway" id="UPA00056">
    <property type="reaction ID" value="UER00097"/>
</dbReference>
<dbReference type="UniPathway" id="UPA00059">
    <property type="reaction ID" value="UER00105"/>
</dbReference>
<dbReference type="Proteomes" id="UP000001121">
    <property type="component" value="Chromosome"/>
</dbReference>
<dbReference type="GO" id="GO:0051539">
    <property type="term" value="F:4 iron, 4 sulfur cluster binding"/>
    <property type="evidence" value="ECO:0007669"/>
    <property type="project" value="UniProtKB-UniRule"/>
</dbReference>
<dbReference type="GO" id="GO:0051745">
    <property type="term" value="F:4-hydroxy-3-methylbut-2-enyl diphosphate reductase activity"/>
    <property type="evidence" value="ECO:0007669"/>
    <property type="project" value="UniProtKB-UniRule"/>
</dbReference>
<dbReference type="GO" id="GO:0046872">
    <property type="term" value="F:metal ion binding"/>
    <property type="evidence" value="ECO:0007669"/>
    <property type="project" value="UniProtKB-KW"/>
</dbReference>
<dbReference type="GO" id="GO:0050992">
    <property type="term" value="P:dimethylallyl diphosphate biosynthetic process"/>
    <property type="evidence" value="ECO:0007669"/>
    <property type="project" value="UniProtKB-UniRule"/>
</dbReference>
<dbReference type="GO" id="GO:0019288">
    <property type="term" value="P:isopentenyl diphosphate biosynthetic process, methylerythritol 4-phosphate pathway"/>
    <property type="evidence" value="ECO:0007669"/>
    <property type="project" value="UniProtKB-UniRule"/>
</dbReference>
<dbReference type="GO" id="GO:0016114">
    <property type="term" value="P:terpenoid biosynthetic process"/>
    <property type="evidence" value="ECO:0007669"/>
    <property type="project" value="UniProtKB-UniRule"/>
</dbReference>
<dbReference type="CDD" id="cd13944">
    <property type="entry name" value="lytB_ispH"/>
    <property type="match status" value="1"/>
</dbReference>
<dbReference type="Gene3D" id="3.40.50.11270">
    <property type="match status" value="1"/>
</dbReference>
<dbReference type="Gene3D" id="3.40.1010.20">
    <property type="entry name" value="4-hydroxy-3-methylbut-2-enyl diphosphate reductase, catalytic domain"/>
    <property type="match status" value="2"/>
</dbReference>
<dbReference type="HAMAP" id="MF_00191">
    <property type="entry name" value="IspH"/>
    <property type="match status" value="1"/>
</dbReference>
<dbReference type="InterPro" id="IPR003451">
    <property type="entry name" value="LytB/IspH"/>
</dbReference>
<dbReference type="NCBIfam" id="TIGR00216">
    <property type="entry name" value="ispH_lytB"/>
    <property type="match status" value="1"/>
</dbReference>
<dbReference type="NCBIfam" id="NF002187">
    <property type="entry name" value="PRK01045.1-1"/>
    <property type="match status" value="1"/>
</dbReference>
<dbReference type="PANTHER" id="PTHR30426">
    <property type="entry name" value="4-HYDROXY-3-METHYLBUT-2-ENYL DIPHOSPHATE REDUCTASE"/>
    <property type="match status" value="1"/>
</dbReference>
<dbReference type="PANTHER" id="PTHR30426:SF0">
    <property type="entry name" value="4-HYDROXY-3-METHYLBUT-2-ENYL DIPHOSPHATE REDUCTASE"/>
    <property type="match status" value="1"/>
</dbReference>
<dbReference type="Pfam" id="PF02401">
    <property type="entry name" value="LYTB"/>
    <property type="match status" value="1"/>
</dbReference>
<organism>
    <name type="scientific">Campylobacter concisus (strain 13826)</name>
    <dbReference type="NCBI Taxonomy" id="360104"/>
    <lineage>
        <taxon>Bacteria</taxon>
        <taxon>Pseudomonadati</taxon>
        <taxon>Campylobacterota</taxon>
        <taxon>Epsilonproteobacteria</taxon>
        <taxon>Campylobacterales</taxon>
        <taxon>Campylobacteraceae</taxon>
        <taxon>Campylobacter</taxon>
    </lineage>
</organism>
<gene>
    <name evidence="1" type="primary">ispH</name>
    <name type="ordered locus">Ccon26_05450</name>
    <name type="ORF">CCC13826_1566</name>
</gene>